<proteinExistence type="evidence at protein level"/>
<accession>A0QQU5</accession>
<accession>I7G488</accession>
<reference key="1">
    <citation type="submission" date="2006-10" db="EMBL/GenBank/DDBJ databases">
        <authorList>
            <person name="Fleischmann R.D."/>
            <person name="Dodson R.J."/>
            <person name="Haft D.H."/>
            <person name="Merkel J.S."/>
            <person name="Nelson W.C."/>
            <person name="Fraser C.M."/>
        </authorList>
    </citation>
    <scope>NUCLEOTIDE SEQUENCE [LARGE SCALE GENOMIC DNA]</scope>
    <source>
        <strain>ATCC 700084 / mc(2)155</strain>
    </source>
</reference>
<reference key="2">
    <citation type="journal article" date="2007" name="Genome Biol.">
        <title>Interrupted coding sequences in Mycobacterium smegmatis: authentic mutations or sequencing errors?</title>
        <authorList>
            <person name="Deshayes C."/>
            <person name="Perrodou E."/>
            <person name="Gallien S."/>
            <person name="Euphrasie D."/>
            <person name="Schaeffer C."/>
            <person name="Van-Dorsselaer A."/>
            <person name="Poch O."/>
            <person name="Lecompte O."/>
            <person name="Reyrat J.-M."/>
        </authorList>
    </citation>
    <scope>NUCLEOTIDE SEQUENCE [LARGE SCALE GENOMIC DNA]</scope>
    <source>
        <strain>ATCC 700084 / mc(2)155</strain>
    </source>
</reference>
<reference key="3">
    <citation type="journal article" date="2009" name="Genome Res.">
        <title>Ortho-proteogenomics: multiple proteomes investigation through orthology and a new MS-based protocol.</title>
        <authorList>
            <person name="Gallien S."/>
            <person name="Perrodou E."/>
            <person name="Carapito C."/>
            <person name="Deshayes C."/>
            <person name="Reyrat J.-M."/>
            <person name="Van Dorsselaer A."/>
            <person name="Poch O."/>
            <person name="Schaeffer C."/>
            <person name="Lecompte O."/>
        </authorList>
    </citation>
    <scope>NUCLEOTIDE SEQUENCE [LARGE SCALE GENOMIC DNA]</scope>
    <scope>IDENTIFICATION BY MASS SPECTROMETRY [LARGE SCALE ANALYSIS]</scope>
    <scope>CLEAVAGE OF INITIATOR METHIONINE</scope>
    <source>
        <strain>ATCC 700084 / mc(2)155</strain>
    </source>
</reference>
<reference key="4">
    <citation type="journal article" date="2010" name="Mol. Biosyst.">
        <title>Expansion of the mycobacterial 'PUPylome'.</title>
        <authorList>
            <person name="Watrous J."/>
            <person name="Burns K."/>
            <person name="Liu W.T."/>
            <person name="Patel A."/>
            <person name="Hook V."/>
            <person name="Bafna V."/>
            <person name="Barry C.E. III"/>
            <person name="Bark S."/>
            <person name="Dorrestein P.C."/>
        </authorList>
    </citation>
    <scope>PUPYLATION AT LYS-132</scope>
    <scope>IDENTIFICATION BY MASS SPECTROMETRY</scope>
</reference>
<dbReference type="EC" id="5.6.1.7" evidence="2"/>
<dbReference type="EMBL" id="CP000480">
    <property type="protein sequence ID" value="ABK71693.1"/>
    <property type="molecule type" value="Genomic_DNA"/>
</dbReference>
<dbReference type="EMBL" id="CP001663">
    <property type="protein sequence ID" value="AFP37339.1"/>
    <property type="molecule type" value="Genomic_DNA"/>
</dbReference>
<dbReference type="RefSeq" id="YP_885283.1">
    <property type="nucleotide sequence ID" value="NC_008596.1"/>
</dbReference>
<dbReference type="SMR" id="A0QQU5"/>
<dbReference type="STRING" id="246196.MSMEG_0880"/>
<dbReference type="PaxDb" id="246196-MSMEI_0859"/>
<dbReference type="KEGG" id="msb:LJ00_04375"/>
<dbReference type="KEGG" id="msg:MSMEI_0859"/>
<dbReference type="KEGG" id="msm:MSMEG_0880"/>
<dbReference type="PATRIC" id="fig|246196.19.peg.870"/>
<dbReference type="eggNOG" id="COG0459">
    <property type="taxonomic scope" value="Bacteria"/>
</dbReference>
<dbReference type="OrthoDB" id="9766614at2"/>
<dbReference type="Proteomes" id="UP000000757">
    <property type="component" value="Chromosome"/>
</dbReference>
<dbReference type="Proteomes" id="UP000006158">
    <property type="component" value="Chromosome"/>
</dbReference>
<dbReference type="GO" id="GO:0042603">
    <property type="term" value="C:capsule"/>
    <property type="evidence" value="ECO:0007669"/>
    <property type="project" value="UniProtKB-SubCell"/>
</dbReference>
<dbReference type="GO" id="GO:0009986">
    <property type="term" value="C:cell surface"/>
    <property type="evidence" value="ECO:0007669"/>
    <property type="project" value="UniProtKB-SubCell"/>
</dbReference>
<dbReference type="GO" id="GO:0005737">
    <property type="term" value="C:cytoplasm"/>
    <property type="evidence" value="ECO:0007669"/>
    <property type="project" value="UniProtKB-UniRule"/>
</dbReference>
<dbReference type="GO" id="GO:0005576">
    <property type="term" value="C:extracellular region"/>
    <property type="evidence" value="ECO:0007669"/>
    <property type="project" value="UniProtKB-KW"/>
</dbReference>
<dbReference type="GO" id="GO:0005524">
    <property type="term" value="F:ATP binding"/>
    <property type="evidence" value="ECO:0007669"/>
    <property type="project" value="UniProtKB-UniRule"/>
</dbReference>
<dbReference type="GO" id="GO:0140662">
    <property type="term" value="F:ATP-dependent protein folding chaperone"/>
    <property type="evidence" value="ECO:0007669"/>
    <property type="project" value="InterPro"/>
</dbReference>
<dbReference type="GO" id="GO:0016853">
    <property type="term" value="F:isomerase activity"/>
    <property type="evidence" value="ECO:0007669"/>
    <property type="project" value="UniProtKB-KW"/>
</dbReference>
<dbReference type="GO" id="GO:0051082">
    <property type="term" value="F:unfolded protein binding"/>
    <property type="evidence" value="ECO:0007669"/>
    <property type="project" value="UniProtKB-UniRule"/>
</dbReference>
<dbReference type="GO" id="GO:0042026">
    <property type="term" value="P:protein refolding"/>
    <property type="evidence" value="ECO:0007669"/>
    <property type="project" value="UniProtKB-UniRule"/>
</dbReference>
<dbReference type="CDD" id="cd03344">
    <property type="entry name" value="GroEL"/>
    <property type="match status" value="1"/>
</dbReference>
<dbReference type="FunFam" id="3.50.7.10:FF:000001">
    <property type="entry name" value="60 kDa chaperonin"/>
    <property type="match status" value="1"/>
</dbReference>
<dbReference type="Gene3D" id="3.50.7.10">
    <property type="entry name" value="GroEL"/>
    <property type="match status" value="1"/>
</dbReference>
<dbReference type="Gene3D" id="1.10.560.10">
    <property type="entry name" value="GroEL-like equatorial domain"/>
    <property type="match status" value="1"/>
</dbReference>
<dbReference type="Gene3D" id="3.30.260.10">
    <property type="entry name" value="TCP-1-like chaperonin intermediate domain"/>
    <property type="match status" value="1"/>
</dbReference>
<dbReference type="HAMAP" id="MF_00600">
    <property type="entry name" value="CH60"/>
    <property type="match status" value="1"/>
</dbReference>
<dbReference type="InterPro" id="IPR018370">
    <property type="entry name" value="Chaperonin_Cpn60_CS"/>
</dbReference>
<dbReference type="InterPro" id="IPR001844">
    <property type="entry name" value="Cpn60/GroEL"/>
</dbReference>
<dbReference type="InterPro" id="IPR002423">
    <property type="entry name" value="Cpn60/GroEL/TCP-1"/>
</dbReference>
<dbReference type="InterPro" id="IPR027409">
    <property type="entry name" value="GroEL-like_apical_dom_sf"/>
</dbReference>
<dbReference type="InterPro" id="IPR027413">
    <property type="entry name" value="GROEL-like_equatorial_sf"/>
</dbReference>
<dbReference type="InterPro" id="IPR027410">
    <property type="entry name" value="TCP-1-like_intermed_sf"/>
</dbReference>
<dbReference type="NCBIfam" id="TIGR02348">
    <property type="entry name" value="GroEL"/>
    <property type="match status" value="1"/>
</dbReference>
<dbReference type="NCBIfam" id="NF000592">
    <property type="entry name" value="PRK00013.1"/>
    <property type="match status" value="1"/>
</dbReference>
<dbReference type="NCBIfam" id="NF009487">
    <property type="entry name" value="PRK12849.1"/>
    <property type="match status" value="1"/>
</dbReference>
<dbReference type="NCBIfam" id="NF009488">
    <property type="entry name" value="PRK12850.1"/>
    <property type="match status" value="1"/>
</dbReference>
<dbReference type="NCBIfam" id="NF009489">
    <property type="entry name" value="PRK12851.1"/>
    <property type="match status" value="1"/>
</dbReference>
<dbReference type="PANTHER" id="PTHR45633">
    <property type="entry name" value="60 KDA HEAT SHOCK PROTEIN, MITOCHONDRIAL"/>
    <property type="match status" value="1"/>
</dbReference>
<dbReference type="Pfam" id="PF00118">
    <property type="entry name" value="Cpn60_TCP1"/>
    <property type="match status" value="1"/>
</dbReference>
<dbReference type="PRINTS" id="PR00298">
    <property type="entry name" value="CHAPERONIN60"/>
</dbReference>
<dbReference type="SUPFAM" id="SSF52029">
    <property type="entry name" value="GroEL apical domain-like"/>
    <property type="match status" value="1"/>
</dbReference>
<dbReference type="SUPFAM" id="SSF48592">
    <property type="entry name" value="GroEL equatorial domain-like"/>
    <property type="match status" value="1"/>
</dbReference>
<dbReference type="SUPFAM" id="SSF54849">
    <property type="entry name" value="GroEL-intermediate domain like"/>
    <property type="match status" value="1"/>
</dbReference>
<dbReference type="PROSITE" id="PS00296">
    <property type="entry name" value="CHAPERONINS_CPN60"/>
    <property type="match status" value="1"/>
</dbReference>
<sequence length="541" mass="56487">MAKTIAYDEEARRGLERGLNSLADAVKVTLGPKGRNVVLEKKWGAPTITNDGVSIAKEIELEDPYEKIGAELVKEVAKKTDDVAGDGTTTATVLAQALVREGLRNVAAGANPLGLKRGIEKAVEKVTETLLKSAKEVETKEQIAATAGISAGDQSIGDLIAEAMDKVGNEGVITVEESNTFGLQLELTEGMRFDKGYISGYFVTDAERQEAVLEDPYILLVSSKVSTVKDLLPLLEKVIQSGKPLLIIAEDVEGEALSTLVVNKIRGTFKSVAVKAPGFGDRRKAMLQDMAILTGGQVISEEVGLSLETADVSLLGKARKVVVTKDETTIVEGAGDAEAIQGRVAQIRAEIENSDSDYDREKLQERLAKLAGGVAVIKAGAATEVELKERKHRIEDAVRNAKAAVEEGIVAGGGVALLQSAPSLEELSLTGDEATGANIVRVALSAPLKQIALNGGLEPGVVAEKVSNLPAGHGLNAATGEYEDLLAAGVADPVKVTRSALQNAASIAALFLTTEAVVADKPEKAAAPAGDPTGGMGGMDF</sequence>
<keyword id="KW-0067">ATP-binding</keyword>
<keyword id="KW-0134">Cell wall</keyword>
<keyword id="KW-0143">Chaperone</keyword>
<keyword id="KW-0413">Isomerase</keyword>
<keyword id="KW-1017">Isopeptide bond</keyword>
<keyword id="KW-0547">Nucleotide-binding</keyword>
<keyword id="KW-1185">Reference proteome</keyword>
<keyword id="KW-0964">Secreted</keyword>
<keyword id="KW-0832">Ubl conjugation</keyword>
<comment type="function">
    <text evidence="2">Together with its co-chaperonin GroES, plays an essential role in assisting protein folding. The GroEL-GroES system forms a nano-cage that allows encapsulation of the non-native substrate proteins and provides a physical environment optimized to promote and accelerate protein folding.</text>
</comment>
<comment type="catalytic activity">
    <reaction evidence="2">
        <text>ATP + H2O + a folded polypeptide = ADP + phosphate + an unfolded polypeptide.</text>
        <dbReference type="EC" id="5.6.1.7"/>
    </reaction>
</comment>
<comment type="subunit">
    <text evidence="2">Forms a cylinder of 14 subunits composed of two heptameric rings stacked back-to-back. Interacts with the co-chaperonin GroES.</text>
</comment>
<comment type="subcellular location">
    <subcellularLocation>
        <location evidence="1">Secreted</location>
        <location evidence="1">Capsule</location>
    </subcellularLocation>
    <subcellularLocation>
        <location evidence="1">Cell surface</location>
    </subcellularLocation>
    <subcellularLocation>
        <location evidence="1">Secreted</location>
        <location evidence="1">Cell wall</location>
    </subcellularLocation>
</comment>
<comment type="similarity">
    <text evidence="2">Belongs to the chaperonin (HSP60) family.</text>
</comment>
<name>CH602_MYCS2</name>
<evidence type="ECO:0000250" key="1">
    <source>
        <dbReference type="UniProtKB" id="P9WPE7"/>
    </source>
</evidence>
<evidence type="ECO:0000255" key="2">
    <source>
        <dbReference type="HAMAP-Rule" id="MF_00600"/>
    </source>
</evidence>
<evidence type="ECO:0000269" key="3">
    <source>
    </source>
</evidence>
<evidence type="ECO:0000269" key="4">
    <source>
    </source>
</evidence>
<feature type="initiator methionine" description="Removed" evidence="3">
    <location>
        <position position="1"/>
    </location>
</feature>
<feature type="chain" id="PRO_0000332018" description="Chaperonin GroEL 2">
    <location>
        <begin position="2"/>
        <end position="541"/>
    </location>
</feature>
<feature type="binding site" evidence="2">
    <location>
        <begin position="29"/>
        <end position="32"/>
    </location>
    <ligand>
        <name>ATP</name>
        <dbReference type="ChEBI" id="CHEBI:30616"/>
    </ligand>
</feature>
<feature type="binding site" evidence="2">
    <location>
        <begin position="86"/>
        <end position="90"/>
    </location>
    <ligand>
        <name>ATP</name>
        <dbReference type="ChEBI" id="CHEBI:30616"/>
    </ligand>
</feature>
<feature type="binding site" evidence="2">
    <location>
        <position position="413"/>
    </location>
    <ligand>
        <name>ATP</name>
        <dbReference type="ChEBI" id="CHEBI:30616"/>
    </ligand>
</feature>
<feature type="binding site" evidence="2">
    <location>
        <begin position="476"/>
        <end position="478"/>
    </location>
    <ligand>
        <name>ATP</name>
        <dbReference type="ChEBI" id="CHEBI:30616"/>
    </ligand>
</feature>
<feature type="binding site" evidence="2">
    <location>
        <position position="492"/>
    </location>
    <ligand>
        <name>ATP</name>
        <dbReference type="ChEBI" id="CHEBI:30616"/>
    </ligand>
</feature>
<feature type="cross-link" description="Isoglutamyl lysine isopeptide (Lys-Gln) (interchain with Q-Cter in protein Pup)" evidence="4">
    <location>
        <position position="132"/>
    </location>
</feature>
<gene>
    <name evidence="2" type="primary">groEL2</name>
    <name evidence="2" type="synonym">groL2</name>
    <name type="ordered locus">MSMEG_0880</name>
    <name type="ordered locus">MSMEI_0859</name>
</gene>
<organism>
    <name type="scientific">Mycolicibacterium smegmatis (strain ATCC 700084 / mc(2)155)</name>
    <name type="common">Mycobacterium smegmatis</name>
    <dbReference type="NCBI Taxonomy" id="246196"/>
    <lineage>
        <taxon>Bacteria</taxon>
        <taxon>Bacillati</taxon>
        <taxon>Actinomycetota</taxon>
        <taxon>Actinomycetes</taxon>
        <taxon>Mycobacteriales</taxon>
        <taxon>Mycobacteriaceae</taxon>
        <taxon>Mycolicibacterium</taxon>
    </lineage>
</organism>
<protein>
    <recommendedName>
        <fullName evidence="2">Chaperonin GroEL 2</fullName>
        <ecNumber evidence="2">5.6.1.7</ecNumber>
    </recommendedName>
    <alternativeName>
        <fullName evidence="2">60 kDa chaperonin 2</fullName>
    </alternativeName>
    <alternativeName>
        <fullName evidence="2">Chaperonin-60 2</fullName>
        <shortName evidence="2">Cpn60 2</shortName>
    </alternativeName>
</protein>